<dbReference type="EMBL" id="AY195582">
    <property type="protein sequence ID" value="AAP57709.1"/>
    <property type="molecule type" value="mRNA"/>
</dbReference>
<dbReference type="EMBL" id="AY195583">
    <property type="protein sequence ID" value="AAP57710.1"/>
    <property type="molecule type" value="mRNA"/>
</dbReference>
<dbReference type="EMBL" id="AY195584">
    <property type="protein sequence ID" value="AAP57711.1"/>
    <property type="molecule type" value="mRNA"/>
</dbReference>
<dbReference type="EMBL" id="AY195585">
    <property type="protein sequence ID" value="AAP57712.1"/>
    <property type="molecule type" value="mRNA"/>
</dbReference>
<dbReference type="EMBL" id="AY195586">
    <property type="protein sequence ID" value="AAP57713.1"/>
    <property type="molecule type" value="mRNA"/>
</dbReference>
<dbReference type="EMBL" id="AY195588">
    <property type="protein sequence ID" value="AAP57714.1"/>
    <property type="molecule type" value="mRNA"/>
</dbReference>
<dbReference type="EMBL" id="AF474973">
    <property type="protein sequence ID" value="AAQ05771.1"/>
    <property type="molecule type" value="mRNA"/>
</dbReference>
<dbReference type="EMBL" id="DQ068177">
    <property type="protein sequence ID" value="AAY98793.1"/>
    <property type="molecule type" value="mRNA"/>
</dbReference>
<dbReference type="EMBL" id="AB095926">
    <property type="protein sequence ID" value="BAC23102.1"/>
    <property type="status" value="ALT_INIT"/>
    <property type="molecule type" value="mRNA"/>
</dbReference>
<dbReference type="EMBL" id="CH236949">
    <property type="protein sequence ID" value="EAL24144.1"/>
    <property type="molecule type" value="Genomic_DNA"/>
</dbReference>
<dbReference type="EMBL" id="CH471091">
    <property type="protein sequence ID" value="EAW76824.1"/>
    <property type="molecule type" value="Genomic_DNA"/>
</dbReference>
<dbReference type="EMBL" id="CH471091">
    <property type="protein sequence ID" value="EAW76825.1"/>
    <property type="molecule type" value="Genomic_DNA"/>
</dbReference>
<dbReference type="EMBL" id="BC029108">
    <property type="protein sequence ID" value="AAH29108.1"/>
    <property type="status" value="ALT_TERM"/>
    <property type="molecule type" value="mRNA"/>
</dbReference>
<dbReference type="EMBL" id="BC038974">
    <property type="protein sequence ID" value="AAH38974.1"/>
    <property type="status" value="ALT_SEQ"/>
    <property type="molecule type" value="mRNA"/>
</dbReference>
<dbReference type="EMBL" id="BC127117">
    <property type="protein sequence ID" value="AAI27118.1"/>
    <property type="status" value="ALT_FRAME"/>
    <property type="molecule type" value="mRNA"/>
</dbReference>
<dbReference type="EMBL" id="BC127118">
    <property type="protein sequence ID" value="AAI27119.1"/>
    <property type="status" value="ALT_FRAME"/>
    <property type="molecule type" value="mRNA"/>
</dbReference>
<dbReference type="EMBL" id="AK097204">
    <property type="protein sequence ID" value="BAC04975.1"/>
    <property type="status" value="ALT_INIT"/>
    <property type="molecule type" value="mRNA"/>
</dbReference>
<dbReference type="EMBL" id="AL834232">
    <property type="protein sequence ID" value="CAD38910.1"/>
    <property type="status" value="ALT_INIT"/>
    <property type="molecule type" value="mRNA"/>
</dbReference>
<dbReference type="CCDS" id="CCDS34681.1">
    <molecule id="Q8IVG5-1"/>
</dbReference>
<dbReference type="RefSeq" id="NP_001290425.1">
    <molecule id="Q8IVG5-1"/>
    <property type="nucleotide sequence ID" value="NM_001303496.3"/>
</dbReference>
<dbReference type="RefSeq" id="NP_001290426.1">
    <molecule id="Q8IVG5-1"/>
    <property type="nucleotide sequence ID" value="NM_001303497.3"/>
</dbReference>
<dbReference type="RefSeq" id="NP_001290427.1">
    <molecule id="Q8IVG5-1"/>
    <property type="nucleotide sequence ID" value="NM_001303498.3"/>
</dbReference>
<dbReference type="RefSeq" id="NP_001290429.1">
    <molecule id="Q8IVG5-1"/>
    <property type="nucleotide sequence ID" value="NM_001303500.3"/>
</dbReference>
<dbReference type="RefSeq" id="NP_001337011.1">
    <molecule id="Q8IVG5-1"/>
    <property type="nucleotide sequence ID" value="NM_001350082.2"/>
</dbReference>
<dbReference type="RefSeq" id="NP_001337012.1">
    <molecule id="Q8IVG5-1"/>
    <property type="nucleotide sequence ID" value="NM_001350083.2"/>
</dbReference>
<dbReference type="RefSeq" id="NP_001337013.1">
    <molecule id="Q8IVG5-1"/>
    <property type="nucleotide sequence ID" value="NM_001350084.2"/>
</dbReference>
<dbReference type="RefSeq" id="NP_001337014.1">
    <molecule id="Q8IVG5-1"/>
    <property type="nucleotide sequence ID" value="NM_001350085.2"/>
</dbReference>
<dbReference type="RefSeq" id="NP_689916.2">
    <molecule id="Q8IVG5-1"/>
    <property type="nucleotide sequence ID" value="NM_152703.3"/>
</dbReference>
<dbReference type="RefSeq" id="XP_005250250.1">
    <property type="nucleotide sequence ID" value="XM_005250193.3"/>
</dbReference>
<dbReference type="RefSeq" id="XP_006715953.1">
    <property type="nucleotide sequence ID" value="XM_006715890.1"/>
</dbReference>
<dbReference type="RefSeq" id="XP_011514205.1">
    <property type="nucleotide sequence ID" value="XM_011515903.2"/>
</dbReference>
<dbReference type="RefSeq" id="XP_016867311.1">
    <property type="nucleotide sequence ID" value="XM_017011822.1"/>
</dbReference>
<dbReference type="RefSeq" id="XP_016867312.1">
    <property type="nucleotide sequence ID" value="XM_017011823.1"/>
</dbReference>
<dbReference type="SMR" id="Q8IVG5"/>
<dbReference type="BioGRID" id="128519">
    <property type="interactions" value="12"/>
</dbReference>
<dbReference type="FunCoup" id="Q8IVG5">
    <property type="interactions" value="264"/>
</dbReference>
<dbReference type="IntAct" id="Q8IVG5">
    <property type="interactions" value="6"/>
</dbReference>
<dbReference type="MINT" id="Q8IVG5"/>
<dbReference type="STRING" id="9606.ENSP00000326247"/>
<dbReference type="GlyCosmos" id="Q8IVG5">
    <property type="glycosylation" value="1 site, 1 glycan"/>
</dbReference>
<dbReference type="GlyGen" id="Q8IVG5">
    <property type="glycosylation" value="1 site, 1 O-linked glycan (1 site)"/>
</dbReference>
<dbReference type="iPTMnet" id="Q8IVG5"/>
<dbReference type="PhosphoSitePlus" id="Q8IVG5"/>
<dbReference type="BioMuta" id="SAMD9L"/>
<dbReference type="DMDM" id="146325547"/>
<dbReference type="jPOST" id="Q8IVG5"/>
<dbReference type="MassIVE" id="Q8IVG5"/>
<dbReference type="PaxDb" id="9606-ENSP00000326247"/>
<dbReference type="PeptideAtlas" id="Q8IVG5"/>
<dbReference type="ProteomicsDB" id="70702">
    <molecule id="Q8IVG5-1"/>
</dbReference>
<dbReference type="ProteomicsDB" id="70703">
    <molecule id="Q8IVG5-2"/>
</dbReference>
<dbReference type="Pumba" id="Q8IVG5"/>
<dbReference type="Antibodypedia" id="15645">
    <property type="antibodies" value="100 antibodies from 19 providers"/>
</dbReference>
<dbReference type="DNASU" id="219285"/>
<dbReference type="Ensembl" id="ENST00000318238.9">
    <molecule id="Q8IVG5-1"/>
    <property type="protein sequence ID" value="ENSP00000326247.4"/>
    <property type="gene ID" value="ENSG00000177409.12"/>
</dbReference>
<dbReference type="Ensembl" id="ENST00000411955.5">
    <molecule id="Q8IVG5-1"/>
    <property type="protein sequence ID" value="ENSP00000405760.1"/>
    <property type="gene ID" value="ENSG00000177409.12"/>
</dbReference>
<dbReference type="Ensembl" id="ENST00000414791.6">
    <molecule id="Q8IVG5-1"/>
    <property type="protein sequence ID" value="ENSP00000396137.2"/>
    <property type="gene ID" value="ENSG00000177409.12"/>
</dbReference>
<dbReference type="Ensembl" id="ENST00000437805.5">
    <molecule id="Q8IVG5-1"/>
    <property type="protein sequence ID" value="ENSP00000408796.1"/>
    <property type="gene ID" value="ENSG00000177409.12"/>
</dbReference>
<dbReference type="Ensembl" id="ENST00000439952.6">
    <molecule id="Q8IVG5-1"/>
    <property type="protein sequence ID" value="ENSP00000391387.2"/>
    <property type="gene ID" value="ENSG00000177409.12"/>
</dbReference>
<dbReference type="Ensembl" id="ENST00000446033.2">
    <molecule id="Q8IVG5-1"/>
    <property type="protein sequence ID" value="ENSP00000410062.2"/>
    <property type="gene ID" value="ENSG00000177409.12"/>
</dbReference>
<dbReference type="Ensembl" id="ENST00000446959.6">
    <molecule id="Q8IVG5-1"/>
    <property type="protein sequence ID" value="ENSP00000391699.2"/>
    <property type="gene ID" value="ENSG00000177409.12"/>
</dbReference>
<dbReference type="Ensembl" id="ENST00000699641.1">
    <molecule id="Q8IVG5-1"/>
    <property type="protein sequence ID" value="ENSP00000514494.1"/>
    <property type="gene ID" value="ENSG00000177409.12"/>
</dbReference>
<dbReference type="GeneID" id="219285"/>
<dbReference type="KEGG" id="hsa:219285"/>
<dbReference type="MANE-Select" id="ENST00000318238.9">
    <property type="protein sequence ID" value="ENSP00000326247.4"/>
    <property type="RefSeq nucleotide sequence ID" value="NM_152703.5"/>
    <property type="RefSeq protein sequence ID" value="NP_689916.2"/>
</dbReference>
<dbReference type="UCSC" id="uc003umh.2">
    <molecule id="Q8IVG5-1"/>
    <property type="organism name" value="human"/>
</dbReference>
<dbReference type="AGR" id="HGNC:1349"/>
<dbReference type="CTD" id="219285"/>
<dbReference type="DisGeNET" id="219285"/>
<dbReference type="GeneCards" id="SAMD9L"/>
<dbReference type="GeneReviews" id="SAMD9L"/>
<dbReference type="HGNC" id="HGNC:1349">
    <property type="gene designation" value="SAMD9L"/>
</dbReference>
<dbReference type="HPA" id="ENSG00000177409">
    <property type="expression patterns" value="Tissue enhanced (lymphoid)"/>
</dbReference>
<dbReference type="MalaCards" id="SAMD9L"/>
<dbReference type="MIM" id="159550">
    <property type="type" value="phenotype"/>
</dbReference>
<dbReference type="MIM" id="252270">
    <property type="type" value="phenotype"/>
</dbReference>
<dbReference type="MIM" id="611170">
    <property type="type" value="gene"/>
</dbReference>
<dbReference type="MIM" id="619806">
    <property type="type" value="phenotype"/>
</dbReference>
<dbReference type="neXtProt" id="NX_Q8IVG5"/>
<dbReference type="OpenTargets" id="ENSG00000177409"/>
<dbReference type="Orphanet" id="2585">
    <property type="disease" value="Ataxia-pancytopenia syndrome"/>
</dbReference>
<dbReference type="Orphanet" id="619367">
    <property type="disease" value="SAMD9L-associated autoinflammatory syndrome"/>
</dbReference>
<dbReference type="Orphanet" id="631106">
    <property type="disease" value="Spinocerebellar ataxia type 49"/>
</dbReference>
<dbReference type="PharmGKB" id="PA25949"/>
<dbReference type="VEuPathDB" id="HostDB:ENSG00000177409"/>
<dbReference type="eggNOG" id="ENOG502QPY6">
    <property type="taxonomic scope" value="Eukaryota"/>
</dbReference>
<dbReference type="GeneTree" id="ENSGT00390000013973"/>
<dbReference type="HOGENOM" id="CLU_002439_0_0_1"/>
<dbReference type="InParanoid" id="Q8IVG5"/>
<dbReference type="OMA" id="SQIYQRW"/>
<dbReference type="OrthoDB" id="2337140at2759"/>
<dbReference type="PAN-GO" id="Q8IVG5">
    <property type="GO annotations" value="1 GO annotation based on evolutionary models"/>
</dbReference>
<dbReference type="PhylomeDB" id="Q8IVG5"/>
<dbReference type="TreeFam" id="TF331842"/>
<dbReference type="PathwayCommons" id="Q8IVG5"/>
<dbReference type="SignaLink" id="Q8IVG5"/>
<dbReference type="BioGRID-ORCS" id="219285">
    <property type="hits" value="17 hits in 1143 CRISPR screens"/>
</dbReference>
<dbReference type="ChiTaRS" id="SAMD9L">
    <property type="organism name" value="human"/>
</dbReference>
<dbReference type="GenomeRNAi" id="219285"/>
<dbReference type="Pharos" id="Q8IVG5">
    <property type="development level" value="Tbio"/>
</dbReference>
<dbReference type="PRO" id="PR:Q8IVG5"/>
<dbReference type="Proteomes" id="UP000005640">
    <property type="component" value="Chromosome 7"/>
</dbReference>
<dbReference type="RNAct" id="Q8IVG5">
    <property type="molecule type" value="protein"/>
</dbReference>
<dbReference type="Bgee" id="ENSG00000177409">
    <property type="expression patterns" value="Expressed in pancreatic ductal cell and 158 other cell types or tissues"/>
</dbReference>
<dbReference type="ExpressionAtlas" id="Q8IVG5">
    <property type="expression patterns" value="baseline and differential"/>
</dbReference>
<dbReference type="GO" id="GO:0005737">
    <property type="term" value="C:cytoplasm"/>
    <property type="evidence" value="ECO:0000318"/>
    <property type="project" value="GO_Central"/>
</dbReference>
<dbReference type="GO" id="GO:0005769">
    <property type="term" value="C:early endosome"/>
    <property type="evidence" value="ECO:0007669"/>
    <property type="project" value="UniProtKB-SubCell"/>
</dbReference>
<dbReference type="GO" id="GO:0005739">
    <property type="term" value="C:mitochondrion"/>
    <property type="evidence" value="ECO:0000314"/>
    <property type="project" value="UniProtKB"/>
</dbReference>
<dbReference type="CDD" id="cd09528">
    <property type="entry name" value="SAM_Samd9_Samd9L"/>
    <property type="match status" value="1"/>
</dbReference>
<dbReference type="FunFam" id="1.10.150.50:FF:000096">
    <property type="entry name" value="Sterile alpha motif domain containing 9 like"/>
    <property type="match status" value="1"/>
</dbReference>
<dbReference type="Gene3D" id="1.10.150.50">
    <property type="entry name" value="Transcription Factor, Ets-1"/>
    <property type="match status" value="1"/>
</dbReference>
<dbReference type="InterPro" id="IPR001660">
    <property type="entry name" value="SAM"/>
</dbReference>
<dbReference type="InterPro" id="IPR013761">
    <property type="entry name" value="SAM/pointed_sf"/>
</dbReference>
<dbReference type="PANTHER" id="PTHR16155">
    <property type="entry name" value="DED DOMAIN-CONTAINING PROTEIN"/>
    <property type="match status" value="1"/>
</dbReference>
<dbReference type="PANTHER" id="PTHR16155:SF18">
    <property type="entry name" value="STERILE ALPHA MOTIF DOMAIN-CONTAINING PROTEIN 9-LIKE"/>
    <property type="match status" value="1"/>
</dbReference>
<dbReference type="SUPFAM" id="SSF47769">
    <property type="entry name" value="SAM/Pointed domain"/>
    <property type="match status" value="1"/>
</dbReference>
<dbReference type="PROSITE" id="PS50105">
    <property type="entry name" value="SAM_DOMAIN"/>
    <property type="match status" value="1"/>
</dbReference>
<organism>
    <name type="scientific">Homo sapiens</name>
    <name type="common">Human</name>
    <dbReference type="NCBI Taxonomy" id="9606"/>
    <lineage>
        <taxon>Eukaryota</taxon>
        <taxon>Metazoa</taxon>
        <taxon>Chordata</taxon>
        <taxon>Craniata</taxon>
        <taxon>Vertebrata</taxon>
        <taxon>Euteleostomi</taxon>
        <taxon>Mammalia</taxon>
        <taxon>Eutheria</taxon>
        <taxon>Euarchontoglires</taxon>
        <taxon>Primates</taxon>
        <taxon>Haplorrhini</taxon>
        <taxon>Catarrhini</taxon>
        <taxon>Hominidae</taxon>
        <taxon>Homo</taxon>
    </lineage>
</organism>
<name>SAM9L_HUMAN</name>
<reference key="1">
    <citation type="journal article" date="2007" name="BMC Genomics">
        <title>Human sterile alpha motif domain 9, a novel gene identified as down-regulated in aggressive fibromatosis, is absent in the mouse.</title>
        <authorList>
            <person name="Li C.F."/>
            <person name="MacDonald J.R."/>
            <person name="Wei R.Y."/>
            <person name="Ray J."/>
            <person name="Lau K."/>
            <person name="Kandel C."/>
            <person name="Koffman R."/>
            <person name="Bell S."/>
            <person name="Scherer S.W."/>
            <person name="Alman B.A."/>
        </authorList>
    </citation>
    <scope>NUCLEOTIDE SEQUENCE [MRNA] (ISOFORMS 1 AND 2)</scope>
    <scope>TISSUE SPECIFICITY</scope>
</reference>
<reference key="2">
    <citation type="submission" date="2002-11" db="EMBL/GenBank/DDBJ databases">
        <title>The nucleotide sequence of a long cDNA clone isolated from human.</title>
        <authorList>
            <person name="Nagase T."/>
            <person name="Kikuno R."/>
            <person name="Ohara O."/>
        </authorList>
    </citation>
    <scope>NUCLEOTIDE SEQUENCE [LARGE SCALE MRNA] (ISOFORM 1)</scope>
    <source>
        <tissue>Brain</tissue>
    </source>
</reference>
<reference key="3">
    <citation type="journal article" date="2003" name="Science">
        <title>Human chromosome 7: DNA sequence and biology.</title>
        <authorList>
            <person name="Scherer S.W."/>
            <person name="Cheung J."/>
            <person name="MacDonald J.R."/>
            <person name="Osborne L.R."/>
            <person name="Nakabayashi K."/>
            <person name="Herbrick J.-A."/>
            <person name="Carson A.R."/>
            <person name="Parker-Katiraee L."/>
            <person name="Skaug J."/>
            <person name="Khaja R."/>
            <person name="Zhang J."/>
            <person name="Hudek A.K."/>
            <person name="Li M."/>
            <person name="Haddad M."/>
            <person name="Duggan G.E."/>
            <person name="Fernandez B.A."/>
            <person name="Kanematsu E."/>
            <person name="Gentles S."/>
            <person name="Christopoulos C.C."/>
            <person name="Choufani S."/>
            <person name="Kwasnicka D."/>
            <person name="Zheng X.H."/>
            <person name="Lai Z."/>
            <person name="Nusskern D.R."/>
            <person name="Zhang Q."/>
            <person name="Gu Z."/>
            <person name="Lu F."/>
            <person name="Zeesman S."/>
            <person name="Nowaczyk M.J."/>
            <person name="Teshima I."/>
            <person name="Chitayat D."/>
            <person name="Shuman C."/>
            <person name="Weksberg R."/>
            <person name="Zackai E.H."/>
            <person name="Grebe T.A."/>
            <person name="Cox S.R."/>
            <person name="Kirkpatrick S.J."/>
            <person name="Rahman N."/>
            <person name="Friedman J.M."/>
            <person name="Heng H.H.Q."/>
            <person name="Pelicci P.G."/>
            <person name="Lo-Coco F."/>
            <person name="Belloni E."/>
            <person name="Shaffer L.G."/>
            <person name="Pober B."/>
            <person name="Morton C.C."/>
            <person name="Gusella J.F."/>
            <person name="Bruns G.A.P."/>
            <person name="Korf B.R."/>
            <person name="Quade B.J."/>
            <person name="Ligon A.H."/>
            <person name="Ferguson H."/>
            <person name="Higgins A.W."/>
            <person name="Leach N.T."/>
            <person name="Herrick S.R."/>
            <person name="Lemyre E."/>
            <person name="Farra C.G."/>
            <person name="Kim H.-G."/>
            <person name="Summers A.M."/>
            <person name="Gripp K.W."/>
            <person name="Roberts W."/>
            <person name="Szatmari P."/>
            <person name="Winsor E.J.T."/>
            <person name="Grzeschik K.-H."/>
            <person name="Teebi A."/>
            <person name="Minassian B.A."/>
            <person name="Kere J."/>
            <person name="Armengol L."/>
            <person name="Pujana M.A."/>
            <person name="Estivill X."/>
            <person name="Wilson M.D."/>
            <person name="Koop B.F."/>
            <person name="Tosi S."/>
            <person name="Moore G.E."/>
            <person name="Boright A.P."/>
            <person name="Zlotorynski E."/>
            <person name="Kerem B."/>
            <person name="Kroisel P.M."/>
            <person name="Petek E."/>
            <person name="Oscier D.G."/>
            <person name="Mould S.J."/>
            <person name="Doehner H."/>
            <person name="Doehner K."/>
            <person name="Rommens J.M."/>
            <person name="Vincent J.B."/>
            <person name="Venter J.C."/>
            <person name="Li P.W."/>
            <person name="Mural R.J."/>
            <person name="Adams M.D."/>
            <person name="Tsui L.-C."/>
        </authorList>
    </citation>
    <scope>NUCLEOTIDE SEQUENCE [LARGE SCALE GENOMIC DNA]</scope>
</reference>
<reference key="4">
    <citation type="submission" date="2005-09" db="EMBL/GenBank/DDBJ databases">
        <authorList>
            <person name="Mural R.J."/>
            <person name="Istrail S."/>
            <person name="Sutton G.G."/>
            <person name="Florea L."/>
            <person name="Halpern A.L."/>
            <person name="Mobarry C.M."/>
            <person name="Lippert R."/>
            <person name="Walenz B."/>
            <person name="Shatkay H."/>
            <person name="Dew I."/>
            <person name="Miller J.R."/>
            <person name="Flanigan M.J."/>
            <person name="Edwards N.J."/>
            <person name="Bolanos R."/>
            <person name="Fasulo D."/>
            <person name="Halldorsson B.V."/>
            <person name="Hannenhalli S."/>
            <person name="Turner R."/>
            <person name="Yooseph S."/>
            <person name="Lu F."/>
            <person name="Nusskern D.R."/>
            <person name="Shue B.C."/>
            <person name="Zheng X.H."/>
            <person name="Zhong F."/>
            <person name="Delcher A.L."/>
            <person name="Huson D.H."/>
            <person name="Kravitz S.A."/>
            <person name="Mouchard L."/>
            <person name="Reinert K."/>
            <person name="Remington K.A."/>
            <person name="Clark A.G."/>
            <person name="Waterman M.S."/>
            <person name="Eichler E.E."/>
            <person name="Adams M.D."/>
            <person name="Hunkapiller M.W."/>
            <person name="Myers E.W."/>
            <person name="Venter J.C."/>
        </authorList>
    </citation>
    <scope>NUCLEOTIDE SEQUENCE [LARGE SCALE GENOMIC DNA]</scope>
</reference>
<reference key="5">
    <citation type="submission" date="2005-07" db="EMBL/GenBank/DDBJ databases">
        <authorList>
            <person name="Mural R.J."/>
            <person name="Istrail S."/>
            <person name="Sutton G.G."/>
            <person name="Florea L."/>
            <person name="Halpern A.L."/>
            <person name="Mobarry C.M."/>
            <person name="Lippert R."/>
            <person name="Walenz B."/>
            <person name="Shatkay H."/>
            <person name="Dew I."/>
            <person name="Miller J.R."/>
            <person name="Flanigan M.J."/>
            <person name="Edwards N.J."/>
            <person name="Bolanos R."/>
            <person name="Fasulo D."/>
            <person name="Halldorsson B.V."/>
            <person name="Hannenhalli S."/>
            <person name="Turner R."/>
            <person name="Yooseph S."/>
            <person name="Lu F."/>
            <person name="Nusskern D.R."/>
            <person name="Shue B.C."/>
            <person name="Zheng X.H."/>
            <person name="Zhong F."/>
            <person name="Delcher A.L."/>
            <person name="Huson D.H."/>
            <person name="Kravitz S.A."/>
            <person name="Mouchard L."/>
            <person name="Reinert K."/>
            <person name="Remington K.A."/>
            <person name="Clark A.G."/>
            <person name="Waterman M.S."/>
            <person name="Eichler E.E."/>
            <person name="Adams M.D."/>
            <person name="Hunkapiller M.W."/>
            <person name="Myers E.W."/>
            <person name="Venter J.C."/>
        </authorList>
    </citation>
    <scope>NUCLEOTIDE SEQUENCE [LARGE SCALE GENOMIC DNA]</scope>
</reference>
<reference key="6">
    <citation type="journal article" date="2004" name="Genome Res.">
        <title>The status, quality, and expansion of the NIH full-length cDNA project: the Mammalian Gene Collection (MGC).</title>
        <authorList>
            <consortium name="The MGC Project Team"/>
        </authorList>
    </citation>
    <scope>NUCLEOTIDE SEQUENCE [LARGE SCALE MRNA] (ISOFORM 1)</scope>
    <source>
        <tissue>Skin</tissue>
        <tissue>Uterus</tissue>
    </source>
</reference>
<reference key="7">
    <citation type="journal article" date="2004" name="Nat. Genet.">
        <title>Complete sequencing and characterization of 21,243 full-length human cDNAs.</title>
        <authorList>
            <person name="Ota T."/>
            <person name="Suzuki Y."/>
            <person name="Nishikawa T."/>
            <person name="Otsuki T."/>
            <person name="Sugiyama T."/>
            <person name="Irie R."/>
            <person name="Wakamatsu A."/>
            <person name="Hayashi K."/>
            <person name="Sato H."/>
            <person name="Nagai K."/>
            <person name="Kimura K."/>
            <person name="Makita H."/>
            <person name="Sekine M."/>
            <person name="Obayashi M."/>
            <person name="Nishi T."/>
            <person name="Shibahara T."/>
            <person name="Tanaka T."/>
            <person name="Ishii S."/>
            <person name="Yamamoto J."/>
            <person name="Saito K."/>
            <person name="Kawai Y."/>
            <person name="Isono Y."/>
            <person name="Nakamura Y."/>
            <person name="Nagahari K."/>
            <person name="Murakami K."/>
            <person name="Yasuda T."/>
            <person name="Iwayanagi T."/>
            <person name="Wagatsuma M."/>
            <person name="Shiratori A."/>
            <person name="Sudo H."/>
            <person name="Hosoiri T."/>
            <person name="Kaku Y."/>
            <person name="Kodaira H."/>
            <person name="Kondo H."/>
            <person name="Sugawara M."/>
            <person name="Takahashi M."/>
            <person name="Kanda K."/>
            <person name="Yokoi T."/>
            <person name="Furuya T."/>
            <person name="Kikkawa E."/>
            <person name="Omura Y."/>
            <person name="Abe K."/>
            <person name="Kamihara K."/>
            <person name="Katsuta N."/>
            <person name="Sato K."/>
            <person name="Tanikawa M."/>
            <person name="Yamazaki M."/>
            <person name="Ninomiya K."/>
            <person name="Ishibashi T."/>
            <person name="Yamashita H."/>
            <person name="Murakawa K."/>
            <person name="Fujimori K."/>
            <person name="Tanai H."/>
            <person name="Kimata M."/>
            <person name="Watanabe M."/>
            <person name="Hiraoka S."/>
            <person name="Chiba Y."/>
            <person name="Ishida S."/>
            <person name="Ono Y."/>
            <person name="Takiguchi S."/>
            <person name="Watanabe S."/>
            <person name="Yosida M."/>
            <person name="Hotuta T."/>
            <person name="Kusano J."/>
            <person name="Kanehori K."/>
            <person name="Takahashi-Fujii A."/>
            <person name="Hara H."/>
            <person name="Tanase T.-O."/>
            <person name="Nomura Y."/>
            <person name="Togiya S."/>
            <person name="Komai F."/>
            <person name="Hara R."/>
            <person name="Takeuchi K."/>
            <person name="Arita M."/>
            <person name="Imose N."/>
            <person name="Musashino K."/>
            <person name="Yuuki H."/>
            <person name="Oshima A."/>
            <person name="Sasaki N."/>
            <person name="Aotsuka S."/>
            <person name="Yoshikawa Y."/>
            <person name="Matsunawa H."/>
            <person name="Ichihara T."/>
            <person name="Shiohata N."/>
            <person name="Sano S."/>
            <person name="Moriya S."/>
            <person name="Momiyama H."/>
            <person name="Satoh N."/>
            <person name="Takami S."/>
            <person name="Terashima Y."/>
            <person name="Suzuki O."/>
            <person name="Nakagawa S."/>
            <person name="Senoh A."/>
            <person name="Mizoguchi H."/>
            <person name="Goto Y."/>
            <person name="Shimizu F."/>
            <person name="Wakebe H."/>
            <person name="Hishigaki H."/>
            <person name="Watanabe T."/>
            <person name="Sugiyama A."/>
            <person name="Takemoto M."/>
            <person name="Kawakami B."/>
            <person name="Yamazaki M."/>
            <person name="Watanabe K."/>
            <person name="Kumagai A."/>
            <person name="Itakura S."/>
            <person name="Fukuzumi Y."/>
            <person name="Fujimori Y."/>
            <person name="Komiyama M."/>
            <person name="Tashiro H."/>
            <person name="Tanigami A."/>
            <person name="Fujiwara T."/>
            <person name="Ono T."/>
            <person name="Yamada K."/>
            <person name="Fujii Y."/>
            <person name="Ozaki K."/>
            <person name="Hirao M."/>
            <person name="Ohmori Y."/>
            <person name="Kawabata A."/>
            <person name="Hikiji T."/>
            <person name="Kobatake N."/>
            <person name="Inagaki H."/>
            <person name="Ikema Y."/>
            <person name="Okamoto S."/>
            <person name="Okitani R."/>
            <person name="Kawakami T."/>
            <person name="Noguchi S."/>
            <person name="Itoh T."/>
            <person name="Shigeta K."/>
            <person name="Senba T."/>
            <person name="Matsumura K."/>
            <person name="Nakajima Y."/>
            <person name="Mizuno T."/>
            <person name="Morinaga M."/>
            <person name="Sasaki M."/>
            <person name="Togashi T."/>
            <person name="Oyama M."/>
            <person name="Hata H."/>
            <person name="Watanabe M."/>
            <person name="Komatsu T."/>
            <person name="Mizushima-Sugano J."/>
            <person name="Satoh T."/>
            <person name="Shirai Y."/>
            <person name="Takahashi Y."/>
            <person name="Nakagawa K."/>
            <person name="Okumura K."/>
            <person name="Nagase T."/>
            <person name="Nomura N."/>
            <person name="Kikuchi H."/>
            <person name="Masuho Y."/>
            <person name="Yamashita R."/>
            <person name="Nakai K."/>
            <person name="Yada T."/>
            <person name="Nakamura Y."/>
            <person name="Ohara O."/>
            <person name="Isogai T."/>
            <person name="Sugano S."/>
        </authorList>
    </citation>
    <scope>NUCLEOTIDE SEQUENCE [LARGE SCALE MRNA] OF 868-1584 (ISOFORM 1)</scope>
    <source>
        <tissue>Spleen</tissue>
    </source>
</reference>
<reference key="8">
    <citation type="journal article" date="2007" name="BMC Genomics">
        <title>The full-ORF clone resource of the German cDNA consortium.</title>
        <authorList>
            <person name="Bechtel S."/>
            <person name="Rosenfelder H."/>
            <person name="Duda A."/>
            <person name="Schmidt C.P."/>
            <person name="Ernst U."/>
            <person name="Wellenreuther R."/>
            <person name="Mehrle A."/>
            <person name="Schuster C."/>
            <person name="Bahr A."/>
            <person name="Bloecker H."/>
            <person name="Heubner D."/>
            <person name="Hoerlein A."/>
            <person name="Michel G."/>
            <person name="Wedler H."/>
            <person name="Koehrer K."/>
            <person name="Ottenwaelder B."/>
            <person name="Poustka A."/>
            <person name="Wiemann S."/>
            <person name="Schupp I."/>
        </authorList>
    </citation>
    <scope>NUCLEOTIDE SEQUENCE [LARGE SCALE MRNA] OF 1090-1584 (ISOFORM 1)</scope>
    <source>
        <tissue>Amygdala</tissue>
    </source>
</reference>
<reference key="9">
    <citation type="journal article" date="2011" name="BMC Syst. Biol.">
        <title>Initial characterization of the human central proteome.</title>
        <authorList>
            <person name="Burkard T.R."/>
            <person name="Planyavsky M."/>
            <person name="Kaupe I."/>
            <person name="Breitwieser F.P."/>
            <person name="Buerckstuemmer T."/>
            <person name="Bennett K.L."/>
            <person name="Superti-Furga G."/>
            <person name="Colinge J."/>
        </authorList>
    </citation>
    <scope>IDENTIFICATION BY MASS SPECTROMETRY [LARGE SCALE ANALYSIS]</scope>
</reference>
<reference key="10">
    <citation type="journal article" date="2013" name="Cancer Cell">
        <title>Haploinsufficiency of SAMD9L, an endosome fusion facilitator, causes myeloid malignancies in mice mimicking human diseases with monosomy 7.</title>
        <authorList>
            <person name="Nagamachi A."/>
            <person name="Matsui H."/>
            <person name="Asou H."/>
            <person name="Ozaki Y."/>
            <person name="Aki D."/>
            <person name="Kanai A."/>
            <person name="Takubo K."/>
            <person name="Suda T."/>
            <person name="Nakamura T."/>
            <person name="Wolff L."/>
            <person name="Honda H."/>
            <person name="Inaba T."/>
        </authorList>
    </citation>
    <scope>INTERACTION WITH EEA1</scope>
</reference>
<reference key="11">
    <citation type="journal article" date="2016" name="Am. J. Hum. Genet.">
        <title>Ataxia-pancytopenia syndrome is caused by missense mutations in SAMD9L.</title>
        <authorList>
            <person name="Chen D.H."/>
            <person name="Below J.E."/>
            <person name="Shimamura A."/>
            <person name="Keel S.B."/>
            <person name="Matsushita M."/>
            <person name="Wolff J."/>
            <person name="Sul Y."/>
            <person name="Bonkowski E."/>
            <person name="Castella M."/>
            <person name="Taniguchi T."/>
            <person name="Nickerson D."/>
            <person name="Papayannopoulou T."/>
            <person name="Bird T.D."/>
            <person name="Raskind W.H."/>
        </authorList>
    </citation>
    <scope>INVOLVEMENT IN ATXPC</scope>
    <scope>VARIANTS ATXPC GLN-880 AND SER-1196</scope>
</reference>
<reference key="12">
    <citation type="journal article" date="2018" name="JCI Insight">
        <title>Germline SAMD9 and SAMD9L mutations are associated with extensive genetic evolution and diverse hematologic outcomes.</title>
        <authorList>
            <person name="Wong J.C."/>
            <person name="Bryant V."/>
            <person name="Lamprecht T."/>
            <person name="Ma J."/>
            <person name="Walsh M."/>
            <person name="Schwartz J."/>
            <person name="Del Pilar Alzamora M."/>
            <person name="Mullighan C.G."/>
            <person name="Loh M.L."/>
            <person name="Ribeiro R."/>
            <person name="Downing J.R."/>
            <person name="Carroll W.L."/>
            <person name="Davis J."/>
            <person name="Gold S."/>
            <person name="Rogers P.C."/>
            <person name="Israels S."/>
            <person name="Yanofsky R."/>
            <person name="Shannon K."/>
            <person name="Klco J.M."/>
        </authorList>
    </citation>
    <scope>INVOLVEMENT IN M7MLS1</scope>
    <scope>VARIANTS M7MLS1 GLN-880; CYS-986; LYS-1281 AND ALA-1512</scope>
</reference>
<reference key="13">
    <citation type="journal article" date="2022" name="Brain Commun.">
        <title>New spinocerebellar ataxia subtype caused by SAMD9L mutation triggering mitochondrial dysregulation (SCA49).</title>
        <authorList>
            <person name="Corral-Juan M."/>
            <person name="Casquero P."/>
            <person name="Giraldo-Restrepo N."/>
            <person name="Laurie S."/>
            <person name="Martinez-Pineiro A."/>
            <person name="Mateo-Montero R.C."/>
            <person name="Ispierto L."/>
            <person name="Vilas D."/>
            <person name="Tolosa E."/>
            <person name="Volpini V."/>
            <person name="Alvarez-Ramo R."/>
            <person name="Sanchez I."/>
            <person name="Matilla-Duenas A."/>
        </authorList>
    </citation>
    <scope>VARIANT SCA49 LEU-626</scope>
    <scope>CHARACTERIZATION OF VARIANT SCA49 LEU-626</scope>
    <scope>INVOLVEMENT IN SCA49</scope>
    <scope>TISSUE SPECIFICITY</scope>
    <scope>SUBCELLULAR LOCATION</scope>
</reference>
<accession>Q8IVG5</accession>
<accession>A0JP23</accession>
<accession>A0JP24</accession>
<accession>A0PJG8</accession>
<accession>A4D1G8</accession>
<accession>D6W5Q6</accession>
<accession>Q2TV71</accession>
<accession>Q2TV75</accession>
<accession>Q2UZV8</accession>
<accession>Q8IWI4</accession>
<accession>Q8N3L9</accession>
<accession>Q8N875</accession>
<keyword id="KW-0025">Alternative splicing</keyword>
<keyword id="KW-0225">Disease variant</keyword>
<keyword id="KW-0967">Endosome</keyword>
<keyword id="KW-0496">Mitochondrion</keyword>
<keyword id="KW-0523">Neurodegeneration</keyword>
<keyword id="KW-1267">Proteomics identification</keyword>
<keyword id="KW-1185">Reference proteome</keyword>
<keyword id="KW-0950">Spinocerebellar ataxia</keyword>
<sequence length="1584" mass="184533">MSKQVSLPEMIKDWTKEHVKKWVNEDLKINEQYGQILLSEEVTGLVLQELTEKDLVEMGLPWGPALLIKRSYNKLNSKSPESDNHDPGQLDNSKPSKTEHQKNPKHTKKEEENSMSSNIDYDPREIRDIKQEESILMKENVLDEVANAKHKKKGKLKPEQLTCMPYPFDQFHDSHRYIEHYTLQPETGALNLIDPIHEFKALTNTETATEVDIKMKFSNEVFRFASACMNSRTNGTIHFGVKDKPHGEIVGVKITSKAAFIDHFNVMIKKYFEESEINEAKKCIREPRFVEVLLQNNTPSDRFVIEVDTIPKHSICNDKYFYIQMQICKDKIWKQNQNLSLFVREGASSRDILANSKQRDVDFKAFLQNLKSLVASRKEAEEEYGMKAMKKESEGLKLVKLLIGNRDSLDNSYYDWYILVTNKCHPNQIKHLDFLKEIKWFAVLEFDPESMINGVVKAYKESRVANLHFPNQYEDKTTNMWEKISTLNLYQQPSWIFCNGRSDLKSETYKPLEPHLWQRERASEVRKLILFLTDENIMTRGKFLVVFLLLSSVESPGDPLIETFWAFYQALKGMENMLCISVNSHIYQRWKDLLQTRMKMEDELTNHSISTLNIELVNSTILKLKSVTRSSRRFLPARGSSSVILEKKKEDVLTALEILCENECTETDIEKDKSKFLEFKKSKEEHFYRGGKVSWWNFYFSSENYSSDFVKRDSYEKLKDLIHCWAESPKPIFAKIINLYHHPGCGGTTLAMHVLWDLKKNFRCAVLKNKTTDFAEIAEQVINLVTYRAKSHQDYIPVLLLVDDFEEQENVYFLQNAIHSVLAEKDLRYEKTLVIILNCMRSRNPDESAKLADSIALNYQLSSKEQRAFGAKLKEIEKQHKNCENFYSFMIMKSNFDETYIENVVRNILKGQDVDSKEAQLISFLALLSSYVTDSTISVSQCEIFLGIIYTSTPWEPESLEDKMGTYSTLLIKTEVAEYGRYTGVRIIHPLIALYCLKELERSYHLDKCQIALNILEENLFYDSGIGRDKFQHDVQTLLLTRQRKVYGDETDTLFSPLMEALQNKDIEKVLSAGSRRFPQNAFICQALARHFYIKEKDFNTALDWARQAKMKAPKNSYISDTLGQVYKSEIKWWLDGNKNCRSITVNDLTHLLEAAEKASRAFKESQRQTDSKNYETENWSPQKSQRRYDMYNTACFLGEIEVGLYTIQILQLTPFFHKENELSKKHMVQFLSGKWTIPPDPRNECYLALSKFTSHLKNLQSDLKRCFDFFIDYMVLLKMRYTQKEIAEIMLSKKVSRCFRKYTELFCHLDPCLLQSKESQLLQEENCRKKLEALRADRFAGLLEYLNPNYKDATTMESIVNEYAFLLQQNSKKPMTNEKQNSILANIILSCLKPNSKLIQPLTTLKKQLREVLQFVGLSHQYPGPYFLACLLFWPENQELDQDSKLIEKYVSSLNRSFRGQYKRMCRSKQASTLFYLGKRKGLNSIVHKAKIEQYFDKAQNTNSLWHSGDVWKKNEVKDLLRRLTGQAEGKLISVEYGTEEKIKIPVISVYSGPLRSGRNIERVSFYLGFSIEGPLAYDIEVI</sequence>
<evidence type="ECO:0000250" key="1">
    <source>
        <dbReference type="UniProtKB" id="Q69Z37"/>
    </source>
</evidence>
<evidence type="ECO:0000255" key="2">
    <source>
        <dbReference type="PROSITE-ProRule" id="PRU00184"/>
    </source>
</evidence>
<evidence type="ECO:0000256" key="3">
    <source>
        <dbReference type="SAM" id="MobiDB-lite"/>
    </source>
</evidence>
<evidence type="ECO:0000269" key="4">
    <source>
    </source>
</evidence>
<evidence type="ECO:0000269" key="5">
    <source>
    </source>
</evidence>
<evidence type="ECO:0000269" key="6">
    <source>
    </source>
</evidence>
<evidence type="ECO:0000269" key="7">
    <source>
    </source>
</evidence>
<evidence type="ECO:0000269" key="8">
    <source>
    </source>
</evidence>
<evidence type="ECO:0000303" key="9">
    <source>
    </source>
</evidence>
<evidence type="ECO:0000305" key="10"/>
<gene>
    <name type="primary">SAMD9L</name>
    <name type="synonym">C7orf6</name>
    <name type="synonym">DRIF2</name>
    <name type="synonym">KIAA2005</name>
    <name type="synonym">UEF</name>
</gene>
<proteinExistence type="evidence at protein level"/>
<protein>
    <recommendedName>
        <fullName>Sterile alpha motif domain-containing protein 9-like</fullName>
        <shortName>SAM domain-containing protein 9-like</shortName>
    </recommendedName>
</protein>
<comment type="function">
    <text evidence="1">May be involved in endosome fusion. Mediates down-regulation of growth factor signaling via internalization of growth factor receptors.</text>
</comment>
<comment type="subunit">
    <text evidence="5">Interacts with EEA1.</text>
</comment>
<comment type="subcellular location">
    <subcellularLocation>
        <location evidence="1">Early endosome</location>
    </subcellularLocation>
    <subcellularLocation>
        <location evidence="8">Mitochondrion</location>
    </subcellularLocation>
</comment>
<comment type="alternative products">
    <event type="alternative splicing"/>
    <isoform>
        <id>Q8IVG5-1</id>
        <name>1</name>
        <sequence type="displayed"/>
    </isoform>
    <isoform>
        <id>Q8IVG5-2</id>
        <name>2</name>
        <name>UEF3</name>
        <sequence type="described" ref="VSP_027875"/>
    </isoform>
</comment>
<comment type="tissue specificity">
    <text evidence="4 8">Widely expressed in adult and fetal tissues. Expressed in the cerebellum (PubMed:35310830). Variable expression in tumors. Down-regulated in breast cancer.</text>
</comment>
<comment type="disease" evidence="6">
    <disease id="DI-04781">
        <name>Ataxia-pancytopenia syndrome</name>
        <acronym>ATXPC</acronym>
        <description>An autosomal dominant disorder characterized by cerebellar ataxia, variable hematologic cytopenias, and predisposition to bone marrow failure and myeloid leukemia.</description>
        <dbReference type="MIM" id="159550"/>
    </disease>
    <text>The disease is caused by variants affecting the gene represented in this entry.</text>
</comment>
<comment type="disease" evidence="7">
    <disease id="DI-05981">
        <name>Monosomy 7 myelodysplasia and leukemia syndrome 1</name>
        <acronym>M7MLS1</acronym>
        <description>A hematologic disorder characterized by bone marrow dyspoiesis and pancytopenia manifesting in early childhood, associated with monosomy 7 in the bone marrow. Disease severity ranges from transient thrombocytopenia or anemia, or normal peripheral blood counts with transient bone marrow abnormalities or transient monosomy 7, to frank myelodysplastic syndrome or acute myelogenous leukemia. M7MLS1 inheritance is autosomal dominant with incomplete penetrance and variable expressivity.</description>
        <dbReference type="MIM" id="252270"/>
    </disease>
    <text evidence="7">The disease is caused by variants affecting the gene represented in this entry. Germline variants in SAMD9L with a suppressive effect on the cell cycle are associated with somatic loss of the chromosome 7 harboring the mutant allele. This results in the deletion of several genes and predisposes to the development of myelodysplastic syndrome and acute myelogenous leukemia.</text>
</comment>
<comment type="disease" evidence="8">
    <disease id="DI-06383">
        <name>Spinocerebellar ataxia 49</name>
        <acronym>SCA49</acronym>
        <description>A form of spinocerebellar ataxia, a clinically and genetically heterogeneous group of cerebellar disorders. Patients show progressive incoordination of gait and often poor coordination of hands, speech and eye movements, due to degeneration of the cerebellum with variable involvement of the brainstem and spinal cord. SCA49 is an autosomal dominant, slowly progressive form characterized by ataxia, nystagmus, dysarthria, polyneuropathy, pyramidal signs, cerebellar atrophy and distinctive cerebral demyelination. Affected individuals present with horizontal and vertical gaze-evoked nystagmus and hyperreflexia as initial clinical signs. Age of disease onset ranges from the second to seventh decades, even within the same family.</description>
        <dbReference type="MIM" id="619806"/>
    </disease>
    <text>The disease is caused by variants affecting the gene represented in this entry.</text>
</comment>
<comment type="miscellaneous">
    <molecule>Isoform 2</molecule>
    <text evidence="10">Dubious isoform produced through aberrant splice sites.</text>
</comment>
<comment type="sequence caution" evidence="10">
    <conflict type="frameshift">
        <sequence resource="EMBL-CDS" id="AAI27118"/>
    </conflict>
</comment>
<comment type="sequence caution" evidence="10">
    <conflict type="frameshift">
        <sequence resource="EMBL-CDS" id="AAI27119"/>
    </conflict>
</comment>
<comment type="sequence caution" evidence="10">
    <conflict type="erroneous initiation">
        <sequence resource="EMBL-CDS" id="BAC04975"/>
    </conflict>
</comment>
<comment type="sequence caution" evidence="10">
    <conflict type="erroneous initiation">
        <sequence resource="EMBL-CDS" id="BAC23102"/>
    </conflict>
</comment>
<comment type="sequence caution" evidence="10">
    <conflict type="erroneous initiation">
        <sequence resource="EMBL-CDS" id="CAD38910"/>
    </conflict>
</comment>
<feature type="chain" id="PRO_0000279498" description="Sterile alpha motif domain-containing protein 9-like">
    <location>
        <begin position="1"/>
        <end position="1584"/>
    </location>
</feature>
<feature type="domain" description="SAM" evidence="2">
    <location>
        <begin position="14"/>
        <end position="79"/>
    </location>
</feature>
<feature type="region of interest" description="Disordered" evidence="3">
    <location>
        <begin position="76"/>
        <end position="122"/>
    </location>
</feature>
<feature type="compositionally biased region" description="Basic and acidic residues" evidence="3">
    <location>
        <begin position="80"/>
        <end position="112"/>
    </location>
</feature>
<feature type="splice variant" id="VSP_027875" description="In isoform 2." evidence="9">
    <location>
        <begin position="154"/>
        <end position="1331"/>
    </location>
</feature>
<feature type="sequence variant" id="VAR_030911" description="In dbSNP:rs10488532.">
    <original>V</original>
    <variation>I</variation>
    <location>
        <position position="266"/>
    </location>
</feature>
<feature type="sequence variant" id="VAR_030912" description="In dbSNP:rs2073793.">
    <original>F</original>
    <variation>S</variation>
    <location>
        <position position="289"/>
    </location>
</feature>
<feature type="sequence variant" id="VAR_087095" description="In SCA49; results in motor and sensory impairments when expressed in zebrafish." evidence="8">
    <original>S</original>
    <variation>L</variation>
    <location>
        <position position="626"/>
    </location>
</feature>
<feature type="sequence variant" id="VAR_077034" description="In ATXPC and M7MLS1; dbSNP:rs878855336." evidence="6 7">
    <original>H</original>
    <variation>Q</variation>
    <location>
        <position position="880"/>
    </location>
</feature>
<feature type="sequence variant" id="VAR_085144" description="In M7MLS1." evidence="7">
    <original>R</original>
    <variation>C</variation>
    <location>
        <position position="986"/>
    </location>
</feature>
<feature type="sequence variant" id="VAR_030913" description="In dbSNP:rs17165111.">
    <original>G</original>
    <variation>A</variation>
    <location>
        <position position="1137"/>
    </location>
</feature>
<feature type="sequence variant" id="VAR_077035" description="In ATXPC; uncertain significance; dbSNP:rs878855337." evidence="6">
    <original>C</original>
    <variation>S</variation>
    <location>
        <position position="1196"/>
    </location>
</feature>
<feature type="sequence variant" id="VAR_085145" description="In M7MLS1." evidence="7">
    <original>R</original>
    <variation>K</variation>
    <location>
        <position position="1281"/>
    </location>
</feature>
<feature type="sequence variant" id="VAR_085146" description="In M7MLS1." evidence="7">
    <original>V</original>
    <variation>A</variation>
    <location>
        <position position="1512"/>
    </location>
</feature>
<feature type="sequence variant" id="VAR_030914" description="In dbSNP:rs10282508.">
    <original>N</original>
    <variation>T</variation>
    <location>
        <position position="1516"/>
    </location>
</feature>